<accession>P75594</accession>
<comment type="similarity">
    <text evidence="1">Belongs to the MG185/MG260 family.</text>
</comment>
<sequence>MMTQGPNLIGIHTNTKENEETQKFVNWFLNTSLTWDNNESKTPAQYFTESASYILPLKETFTGSNNKGQSGKNDGKNSNNTFKAKALELFKEQSENKIVGYSDPSDFRGGKFRESIGSAFNATVNSHVDFNTFVANFRANLGSGYDK</sequence>
<reference key="1">
    <citation type="journal article" date="1996" name="Nucleic Acids Res.">
        <title>Complete sequence analysis of the genome of the bacterium Mycoplasma pneumoniae.</title>
        <authorList>
            <person name="Himmelreich R."/>
            <person name="Hilbert H."/>
            <person name="Plagens H."/>
            <person name="Pirkl E."/>
            <person name="Li B.-C."/>
            <person name="Herrmann R."/>
        </authorList>
    </citation>
    <scope>NUCLEOTIDE SEQUENCE [LARGE SCALE GENOMIC DNA]</scope>
    <source>
        <strain>ATCC 29342 / M129 / Subtype 1</strain>
    </source>
</reference>
<protein>
    <recommendedName>
        <fullName>Uncharacterized lipoprotein MPN_098</fullName>
    </recommendedName>
</protein>
<evidence type="ECO:0000305" key="1"/>
<organism>
    <name type="scientific">Mycoplasma pneumoniae (strain ATCC 29342 / M129 / Subtype 1)</name>
    <name type="common">Mycoplasmoides pneumoniae</name>
    <dbReference type="NCBI Taxonomy" id="272634"/>
    <lineage>
        <taxon>Bacteria</taxon>
        <taxon>Bacillati</taxon>
        <taxon>Mycoplasmatota</taxon>
        <taxon>Mycoplasmoidales</taxon>
        <taxon>Mycoplasmoidaceae</taxon>
        <taxon>Mycoplasmoides</taxon>
    </lineage>
</organism>
<keyword id="KW-1185">Reference proteome</keyword>
<name>Y098_MYCPN</name>
<proteinExistence type="inferred from homology"/>
<gene>
    <name type="ordered locus">MPN_098</name>
    <name type="ORF">MP056</name>
    <name type="ORF">R02_orf147</name>
</gene>
<dbReference type="EMBL" id="U00089">
    <property type="protein sequence ID" value="AAB95704.1"/>
    <property type="molecule type" value="Genomic_DNA"/>
</dbReference>
<dbReference type="PIR" id="S73382">
    <property type="entry name" value="S73382"/>
</dbReference>
<dbReference type="RefSeq" id="WP_010874455.1">
    <property type="nucleotide sequence ID" value="NZ_OU342337.1"/>
</dbReference>
<dbReference type="EnsemblBacteria" id="AAB95704">
    <property type="protein sequence ID" value="AAB95704"/>
    <property type="gene ID" value="MPN_098"/>
</dbReference>
<dbReference type="KEGG" id="mpn:MPN_098"/>
<dbReference type="HOGENOM" id="CLU_119022_0_0_14"/>
<dbReference type="Proteomes" id="UP000000808">
    <property type="component" value="Chromosome"/>
</dbReference>
<dbReference type="InterPro" id="IPR004890">
    <property type="entry name" value="Lipoprotein_10_C"/>
</dbReference>
<dbReference type="Pfam" id="PF03202">
    <property type="entry name" value="Lipoprotein_10"/>
    <property type="match status" value="1"/>
</dbReference>
<feature type="chain" id="PRO_0000215276" description="Uncharacterized lipoprotein MPN_098">
    <location>
        <begin position="1"/>
        <end position="147"/>
    </location>
</feature>